<sequence length="316" mass="35009">MTEQMTLRGTLQGHGGWVTQIATTPQYPDMILSASRDKSLIVWRLTRDESSYGVPQKSLHGHGHFVSDVILSSDGQFALSGSWDHTLRLWDLSTGQTTRRFVGHTKDVLSVAFSADNRQIVSGSRDKTIKLWNTLGVCKYTIQDDCHTDWTSCVRFSPNTQNPIIVSSGWDRLVKVWNLTNCKLKTNHYGHTGYVNTVTVSPDGSLCASGGKDSQAMLWDLNEGKHLYTLDGAGDTINALCFSPNRYWLCVASGPSIKIWDLEGKVVVDELKPEVMGTTSKAPTCLSLAWSADGQTLFAGYTDKLIRVWQVSMVSR</sequence>
<feature type="chain" id="PRO_0000127738" description="Small ribosomal subunit protein RACK1">
    <location>
        <begin position="1"/>
        <end position="316"/>
    </location>
</feature>
<feature type="repeat" description="WD 1">
    <location>
        <begin position="4"/>
        <end position="46"/>
    </location>
</feature>
<feature type="repeat" description="WD 2">
    <location>
        <begin position="52"/>
        <end position="93"/>
    </location>
</feature>
<feature type="repeat" description="WD 3">
    <location>
        <begin position="94"/>
        <end position="135"/>
    </location>
</feature>
<feature type="repeat" description="WD 4">
    <location>
        <begin position="137"/>
        <end position="180"/>
    </location>
</feature>
<feature type="repeat" description="WD 5">
    <location>
        <begin position="181"/>
        <end position="221"/>
    </location>
</feature>
<feature type="repeat" description="WD 6">
    <location>
        <begin position="222"/>
        <end position="263"/>
    </location>
</feature>
<feature type="repeat" description="WD 7">
    <location>
        <begin position="264"/>
        <end position="312"/>
    </location>
</feature>
<reference key="1">
    <citation type="submission" date="1996-09" db="EMBL/GenBank/DDBJ databases">
        <authorList>
            <person name="Lardans V."/>
        </authorList>
    </citation>
    <scope>NUCLEOTIDE SEQUENCE [MRNA]</scope>
</reference>
<comment type="similarity">
    <text evidence="1">Belongs to the WD repeat G protein beta family. Ribosomal protein RACK1 subfamily.</text>
</comment>
<protein>
    <recommendedName>
        <fullName evidence="1">Small ribosomal subunit protein RACK1</fullName>
    </recommendedName>
    <alternativeName>
        <fullName>Guanine nucleotide-binding protein subunit beta-2-like 1</fullName>
    </alternativeName>
    <alternativeName>
        <fullName>Receptor of activated protein kinase C</fullName>
        <shortName>RACK</shortName>
    </alternativeName>
</protein>
<name>GBLP_BIOGL</name>
<accession>Q93134</accession>
<organism>
    <name type="scientific">Biomphalaria glabrata</name>
    <name type="common">Bloodfluke planorb</name>
    <name type="synonym">Freshwater snail</name>
    <dbReference type="NCBI Taxonomy" id="6526"/>
    <lineage>
        <taxon>Eukaryota</taxon>
        <taxon>Metazoa</taxon>
        <taxon>Spiralia</taxon>
        <taxon>Lophotrochozoa</taxon>
        <taxon>Mollusca</taxon>
        <taxon>Gastropoda</taxon>
        <taxon>Heterobranchia</taxon>
        <taxon>Euthyneura</taxon>
        <taxon>Panpulmonata</taxon>
        <taxon>Hygrophila</taxon>
        <taxon>Lymnaeoidea</taxon>
        <taxon>Planorbidae</taxon>
        <taxon>Biomphalaria</taxon>
    </lineage>
</organism>
<keyword id="KW-1185">Reference proteome</keyword>
<keyword id="KW-0677">Repeat</keyword>
<keyword id="KW-0687">Ribonucleoprotein</keyword>
<keyword id="KW-0689">Ribosomal protein</keyword>
<keyword id="KW-0853">WD repeat</keyword>
<proteinExistence type="evidence at transcript level"/>
<dbReference type="EMBL" id="U49437">
    <property type="protein sequence ID" value="AAB07039.1"/>
    <property type="molecule type" value="mRNA"/>
</dbReference>
<dbReference type="SMR" id="Q93134"/>
<dbReference type="STRING" id="6526.Q93134"/>
<dbReference type="VEuPathDB" id="VectorBase:BGLAX_027841"/>
<dbReference type="VEuPathDB" id="VectorBase:BGLB002743"/>
<dbReference type="Proteomes" id="UP000076420">
    <property type="component" value="Unassembled WGS sequence"/>
</dbReference>
<dbReference type="Proteomes" id="UP001165740">
    <property type="component" value="Unplaced"/>
</dbReference>
<dbReference type="GO" id="GO:1990904">
    <property type="term" value="C:ribonucleoprotein complex"/>
    <property type="evidence" value="ECO:0007669"/>
    <property type="project" value="UniProtKB-KW"/>
</dbReference>
<dbReference type="GO" id="GO:0005840">
    <property type="term" value="C:ribosome"/>
    <property type="evidence" value="ECO:0007669"/>
    <property type="project" value="UniProtKB-KW"/>
</dbReference>
<dbReference type="GO" id="GO:0043022">
    <property type="term" value="F:ribosome binding"/>
    <property type="evidence" value="ECO:0007669"/>
    <property type="project" value="InterPro"/>
</dbReference>
<dbReference type="GO" id="GO:0045182">
    <property type="term" value="F:translation regulator activity"/>
    <property type="evidence" value="ECO:0007669"/>
    <property type="project" value="InterPro"/>
</dbReference>
<dbReference type="CDD" id="cd00200">
    <property type="entry name" value="WD40"/>
    <property type="match status" value="1"/>
</dbReference>
<dbReference type="FunFam" id="2.130.10.10:FF:001252">
    <property type="entry name" value="Receptor of activated protein C kinase 1"/>
    <property type="match status" value="1"/>
</dbReference>
<dbReference type="Gene3D" id="2.130.10.10">
    <property type="entry name" value="YVTN repeat-like/Quinoprotein amine dehydrogenase"/>
    <property type="match status" value="1"/>
</dbReference>
<dbReference type="InterPro" id="IPR020472">
    <property type="entry name" value="G-protein_beta_WD-40_rep"/>
</dbReference>
<dbReference type="InterPro" id="IPR045223">
    <property type="entry name" value="RACK1-like"/>
</dbReference>
<dbReference type="InterPro" id="IPR015943">
    <property type="entry name" value="WD40/YVTN_repeat-like_dom_sf"/>
</dbReference>
<dbReference type="InterPro" id="IPR019775">
    <property type="entry name" value="WD40_repeat_CS"/>
</dbReference>
<dbReference type="InterPro" id="IPR036322">
    <property type="entry name" value="WD40_repeat_dom_sf"/>
</dbReference>
<dbReference type="InterPro" id="IPR001680">
    <property type="entry name" value="WD40_rpt"/>
</dbReference>
<dbReference type="PANTHER" id="PTHR19868">
    <property type="entry name" value="RECEPTOR FOR ACTIVATED PROTEIN KINASE C RACK1"/>
    <property type="match status" value="1"/>
</dbReference>
<dbReference type="Pfam" id="PF00400">
    <property type="entry name" value="WD40"/>
    <property type="match status" value="7"/>
</dbReference>
<dbReference type="PRINTS" id="PR00320">
    <property type="entry name" value="GPROTEINBRPT"/>
</dbReference>
<dbReference type="SMART" id="SM00320">
    <property type="entry name" value="WD40"/>
    <property type="match status" value="7"/>
</dbReference>
<dbReference type="SUPFAM" id="SSF50978">
    <property type="entry name" value="WD40 repeat-like"/>
    <property type="match status" value="1"/>
</dbReference>
<dbReference type="PROSITE" id="PS00678">
    <property type="entry name" value="WD_REPEATS_1"/>
    <property type="match status" value="4"/>
</dbReference>
<dbReference type="PROSITE" id="PS50082">
    <property type="entry name" value="WD_REPEATS_2"/>
    <property type="match status" value="6"/>
</dbReference>
<dbReference type="PROSITE" id="PS50294">
    <property type="entry name" value="WD_REPEATS_REGION"/>
    <property type="match status" value="1"/>
</dbReference>
<evidence type="ECO:0000305" key="1"/>